<reference key="1">
    <citation type="journal article" date="2003" name="Proc. Natl. Acad. Sci. U.S.A.">
        <title>The complete genome sequence of Mycobacterium bovis.</title>
        <authorList>
            <person name="Garnier T."/>
            <person name="Eiglmeier K."/>
            <person name="Camus J.-C."/>
            <person name="Medina N."/>
            <person name="Mansoor H."/>
            <person name="Pryor M."/>
            <person name="Duthoy S."/>
            <person name="Grondin S."/>
            <person name="Lacroix C."/>
            <person name="Monsempe C."/>
            <person name="Simon S."/>
            <person name="Harris B."/>
            <person name="Atkin R."/>
            <person name="Doggett J."/>
            <person name="Mayes R."/>
            <person name="Keating L."/>
            <person name="Wheeler P.R."/>
            <person name="Parkhill J."/>
            <person name="Barrell B.G."/>
            <person name="Cole S.T."/>
            <person name="Gordon S.V."/>
            <person name="Hewinson R.G."/>
        </authorList>
    </citation>
    <scope>NUCLEOTIDE SEQUENCE [LARGE SCALE GENOMIC DNA]</scope>
    <source>
        <strain>ATCC BAA-935 / AF2122/97</strain>
    </source>
</reference>
<reference key="2">
    <citation type="journal article" date="2017" name="Genome Announc.">
        <title>Updated reference genome sequence and annotation of Mycobacterium bovis AF2122/97.</title>
        <authorList>
            <person name="Malone K.M."/>
            <person name="Farrell D."/>
            <person name="Stuber T.P."/>
            <person name="Schubert O.T."/>
            <person name="Aebersold R."/>
            <person name="Robbe-Austerman S."/>
            <person name="Gordon S.V."/>
        </authorList>
    </citation>
    <scope>NUCLEOTIDE SEQUENCE [LARGE SCALE GENOMIC DNA]</scope>
    <scope>GENOME REANNOTATION</scope>
    <source>
        <strain>ATCC BAA-935 / AF2122/97</strain>
    </source>
</reference>
<proteinExistence type="predicted"/>
<protein>
    <recommendedName>
        <fullName>Uncharacterized protein Mb0031</fullName>
    </recommendedName>
</protein>
<organism>
    <name type="scientific">Mycobacterium bovis (strain ATCC BAA-935 / AF2122/97)</name>
    <dbReference type="NCBI Taxonomy" id="233413"/>
    <lineage>
        <taxon>Bacteria</taxon>
        <taxon>Bacillati</taxon>
        <taxon>Actinomycetota</taxon>
        <taxon>Actinomycetes</taxon>
        <taxon>Mycobacteriales</taxon>
        <taxon>Mycobacteriaceae</taxon>
        <taxon>Mycobacterium</taxon>
        <taxon>Mycobacterium tuberculosis complex</taxon>
    </lineage>
</organism>
<accession>P64672</accession>
<accession>A0A1R3XUQ2</accession>
<accession>P71600</accession>
<accession>X2BDT4</accession>
<dbReference type="EMBL" id="LT708304">
    <property type="protein sequence ID" value="SIT98384.1"/>
    <property type="molecule type" value="Genomic_DNA"/>
</dbReference>
<dbReference type="RefSeq" id="NP_853700.1">
    <property type="nucleotide sequence ID" value="NC_002945.3"/>
</dbReference>
<dbReference type="RefSeq" id="WP_003400413.1">
    <property type="nucleotide sequence ID" value="NC_002945.4"/>
</dbReference>
<dbReference type="SMR" id="P64672"/>
<dbReference type="KEGG" id="mbo:BQ2027_MB0031"/>
<dbReference type="PATRIC" id="fig|233413.5.peg.37"/>
<dbReference type="Proteomes" id="UP000001419">
    <property type="component" value="Chromosome"/>
</dbReference>
<dbReference type="InterPro" id="IPR024296">
    <property type="entry name" value="DUF2710"/>
</dbReference>
<dbReference type="Pfam" id="PF10921">
    <property type="entry name" value="DUF2710"/>
    <property type="match status" value="1"/>
</dbReference>
<sequence length="109" mass="11858">MVSGSDSRSEPSQLSDRDLVESVLRDLSEAADKWEALVTQAETVTYSVDLGDVRAVANSDGRLLELTLHPGVMTGYAHGELADRVNLAITALRDEVEAENRARYGGRLQ</sequence>
<name>Y031_MYCBO</name>
<gene>
    <name type="ordered locus">BQ2027_MB0031</name>
</gene>
<keyword id="KW-1185">Reference proteome</keyword>
<feature type="chain" id="PRO_0000103649" description="Uncharacterized protein Mb0031">
    <location>
        <begin position="1"/>
        <end position="109"/>
    </location>
</feature>